<protein>
    <recommendedName>
        <fullName>Small proline-rich protein 2K</fullName>
    </recommendedName>
</protein>
<reference key="1">
    <citation type="journal article" date="1999" name="Genomics">
        <title>Mouse Sprr2 genes: a clustered family of genes showing differential expression in epithelial tissues.</title>
        <authorList>
            <person name="Song H.J."/>
            <person name="Poy G."/>
            <person name="Darwiche N."/>
            <person name="Lichti U."/>
            <person name="Kuroki T."/>
            <person name="Steinert P.M."/>
            <person name="Kartasova T."/>
        </authorList>
    </citation>
    <scope>NUCLEOTIDE SEQUENCE [GENOMIC DNA]</scope>
    <source>
        <strain>129/SvJ</strain>
    </source>
</reference>
<reference key="2">
    <citation type="journal article" date="2003" name="Mamm. Genome">
        <title>Mouse Sprr locus: a tandem array of coordinately regulated genes.</title>
        <authorList>
            <person name="Patel S."/>
            <person name="Kartasova T."/>
            <person name="Segre J.A."/>
        </authorList>
    </citation>
    <scope>NUCLEOTIDE SEQUENCE [MRNA]</scope>
    <source>
        <strain>C57BL/6J</strain>
    </source>
</reference>
<reference key="3">
    <citation type="journal article" date="2004" name="Mol. Cells">
        <title>Estrogen regulates the expression of the small proline-rich 2 gene family in the mouse uterus.</title>
        <authorList>
            <person name="Hong S.H."/>
            <person name="Nah H.Y."/>
            <person name="Lee J.Y."/>
            <person name="Lee Y.J."/>
            <person name="Lee J.W."/>
            <person name="Gye M.C."/>
            <person name="Kim C.H."/>
            <person name="Kang B.M."/>
            <person name="Kim M.K."/>
        </authorList>
    </citation>
    <scope>TISSUE SPECIFICITY</scope>
</reference>
<organism>
    <name type="scientific">Mus musculus</name>
    <name type="common">Mouse</name>
    <dbReference type="NCBI Taxonomy" id="10090"/>
    <lineage>
        <taxon>Eukaryota</taxon>
        <taxon>Metazoa</taxon>
        <taxon>Chordata</taxon>
        <taxon>Craniata</taxon>
        <taxon>Vertebrata</taxon>
        <taxon>Euteleostomi</taxon>
        <taxon>Mammalia</taxon>
        <taxon>Eutheria</taxon>
        <taxon>Euarchontoglires</taxon>
        <taxon>Glires</taxon>
        <taxon>Rodentia</taxon>
        <taxon>Myomorpha</taxon>
        <taxon>Muroidea</taxon>
        <taxon>Muridae</taxon>
        <taxon>Murinae</taxon>
        <taxon>Mus</taxon>
        <taxon>Mus</taxon>
    </lineage>
</organism>
<sequence>MSYQEQQCKQLCQPLPVCPPPKPCSPPKCPEPCPPPKCPETCPPQPCQRKCPPVLEAPCQQKCPSKSK</sequence>
<keyword id="KW-0963">Cytoplasm</keyword>
<keyword id="KW-0417">Keratinization</keyword>
<keyword id="KW-1185">Reference proteome</keyword>
<keyword id="KW-0677">Repeat</keyword>
<evidence type="ECO:0000250" key="1"/>
<evidence type="ECO:0000269" key="2">
    <source>
    </source>
</evidence>
<evidence type="ECO:0000305" key="3"/>
<proteinExistence type="evidence at transcript level"/>
<feature type="chain" id="PRO_0000150023" description="Small proline-rich protein 2K">
    <location>
        <begin position="1"/>
        <end position="68"/>
    </location>
</feature>
<feature type="repeat" description="1; truncated">
    <location>
        <begin position="21"/>
        <end position="26"/>
    </location>
</feature>
<feature type="repeat" description="2">
    <location>
        <begin position="27"/>
        <end position="35"/>
    </location>
</feature>
<feature type="repeat" description="3">
    <location>
        <begin position="36"/>
        <end position="44"/>
    </location>
</feature>
<feature type="repeat" description="4">
    <location>
        <begin position="45"/>
        <end position="53"/>
    </location>
</feature>
<feature type="region of interest" description="3.5 X 9 AA approximate tandem repeats">
    <location>
        <begin position="21"/>
        <end position="65"/>
    </location>
</feature>
<accession>O70562</accession>
<gene>
    <name type="primary">Sprr2k</name>
</gene>
<name>SPR2K_MOUSE</name>
<comment type="function">
    <text evidence="1">Cross-linked envelope protein of keratinocytes. It is a keratinocyte protein that first appears in the cell cytosol, but ultimately becomes cross-linked to membrane proteins by transglutaminase. All that results in the formation of an insoluble envelope beneath the plasma membrane (By similarity).</text>
</comment>
<comment type="subcellular location">
    <subcellularLocation>
        <location evidence="1">Cytoplasm</location>
    </subcellularLocation>
</comment>
<comment type="tissue specificity">
    <text evidence="2">Not expressed in uterus.</text>
</comment>
<comment type="similarity">
    <text evidence="3">Belongs to the cornifin (SPRR) family.</text>
</comment>
<dbReference type="EMBL" id="AJ005569">
    <property type="protein sequence ID" value="CAA06598.1"/>
    <property type="molecule type" value="Genomic_DNA"/>
</dbReference>
<dbReference type="EMBL" id="AY158995">
    <property type="protein sequence ID" value="AAN86832.1"/>
    <property type="molecule type" value="mRNA"/>
</dbReference>
<dbReference type="CCDS" id="CCDS38512.1"/>
<dbReference type="RefSeq" id="NP_035607.2">
    <property type="nucleotide sequence ID" value="NM_011477.3"/>
</dbReference>
<dbReference type="FunCoup" id="O70562">
    <property type="interactions" value="397"/>
</dbReference>
<dbReference type="STRING" id="10090.ENSMUSP00000063287"/>
<dbReference type="PaxDb" id="10090-ENSMUSP00000063287"/>
<dbReference type="ProteomicsDB" id="263323"/>
<dbReference type="Pumba" id="O70562"/>
<dbReference type="DNASU" id="20765"/>
<dbReference type="GeneID" id="20765"/>
<dbReference type="KEGG" id="mmu:20765"/>
<dbReference type="AGR" id="MGI:1330344"/>
<dbReference type="CTD" id="20765"/>
<dbReference type="MGI" id="MGI:1330344">
    <property type="gene designation" value="Sprr2k"/>
</dbReference>
<dbReference type="InParanoid" id="O70562"/>
<dbReference type="BioGRID-ORCS" id="20765">
    <property type="hits" value="3 hits in 76 CRISPR screens"/>
</dbReference>
<dbReference type="PRO" id="PR:O70562"/>
<dbReference type="Proteomes" id="UP000000589">
    <property type="component" value="Unplaced"/>
</dbReference>
<dbReference type="RNAct" id="O70562">
    <property type="molecule type" value="protein"/>
</dbReference>
<dbReference type="GO" id="GO:0001533">
    <property type="term" value="C:cornified envelope"/>
    <property type="evidence" value="ECO:0000303"/>
    <property type="project" value="UniProtKB"/>
</dbReference>
<dbReference type="GO" id="GO:0005737">
    <property type="term" value="C:cytoplasm"/>
    <property type="evidence" value="ECO:0007669"/>
    <property type="project" value="UniProtKB-SubCell"/>
</dbReference>
<dbReference type="GO" id="GO:0008544">
    <property type="term" value="P:epidermis development"/>
    <property type="evidence" value="ECO:0000303"/>
    <property type="project" value="UniProtKB"/>
</dbReference>
<dbReference type="GO" id="GO:0031424">
    <property type="term" value="P:keratinization"/>
    <property type="evidence" value="ECO:0007669"/>
    <property type="project" value="UniProtKB-KW"/>
</dbReference>
<dbReference type="GO" id="GO:0030216">
    <property type="term" value="P:keratinocyte differentiation"/>
    <property type="evidence" value="ECO:0000303"/>
    <property type="project" value="UniProtKB"/>
</dbReference>
<dbReference type="InterPro" id="IPR029142">
    <property type="entry name" value="SPRR2"/>
</dbReference>
<dbReference type="Pfam" id="PF14820">
    <property type="entry name" value="SPRR2"/>
    <property type="match status" value="1"/>
</dbReference>
<dbReference type="PRINTS" id="PR00021">
    <property type="entry name" value="PRORICH"/>
</dbReference>